<sequence length="210" mass="23987">PRCYRYCKNKPYPKSRFCRGVPDPKIRIFDLGRKKAKVDEFPLCGHMVSDEYEQLSSEALEAARICANKYMVKSCGKDGFHIRVRLHPFHVIRINKMLSCAGADRLQTGMRGAFGKPQGTVARVHMGQVIMSIRTKAQNKEHVVEALRRAKFKFPGRQKIHISKKWGFTKFNADAFEEMVAQKRLIPDGCGVKYVPGRGPLDRWRALHAA</sequence>
<comment type="function">
    <text evidence="1">Component of the large ribosomal subunit. Plays a role in the formation of actively translating ribosomes.</text>
</comment>
<comment type="function">
    <text evidence="4">(Microbial infection) Seems to bind to the leucine zipper of viral and cellular JUN.</text>
</comment>
<comment type="subunit">
    <text evidence="1">Component of the large ribosomal subunit. Mature ribosomes consist of a small (40S) and a large (60S) subunit. The 40S subunit contains about 33 different proteins and 1 molecule of RNA (18S). The 60S subunit contains about 49 different proteins and 3 molecules of RNA (28S, 5.8S and 5S).</text>
</comment>
<comment type="subcellular location">
    <subcellularLocation>
        <location evidence="2">Cytoplasm</location>
    </subcellularLocation>
</comment>
<comment type="similarity">
    <text evidence="3">Belongs to the universal ribosomal protein uL16 family.</text>
</comment>
<protein>
    <recommendedName>
        <fullName evidence="3">Large ribosomal subunit protein uL16</fullName>
    </recommendedName>
    <alternativeName>
        <fullName evidence="3">60S ribosomal protein L10</fullName>
    </alternativeName>
    <alternativeName>
        <fullName>Jun-binding protein JIF-1</fullName>
    </alternativeName>
    <alternativeName>
        <fullName evidence="1">Ribosomal protein L10</fullName>
    </alternativeName>
</protein>
<feature type="chain" id="PRO_0000147111" description="Large ribosomal subunit protein uL16">
    <location>
        <begin position="1" status="less than"/>
        <end position="210"/>
    </location>
</feature>
<feature type="non-terminal residue">
    <location>
        <position position="1"/>
    </location>
</feature>
<keyword id="KW-0002">3D-structure</keyword>
<keyword id="KW-0963">Cytoplasm</keyword>
<keyword id="KW-0217">Developmental protein</keyword>
<keyword id="KW-1185">Reference proteome</keyword>
<keyword id="KW-0687">Ribonucleoprotein</keyword>
<keyword id="KW-0689">Ribosomal protein</keyword>
<reference key="1">
    <citation type="journal article" date="1993" name="Proc. Natl. Acad. Sci. U.S.A.">
        <title>A Jun-binding protein related to a putative tumor suppressor.</title>
        <authorList>
            <person name="Monteclaro F.S."/>
            <person name="Vogt P.K."/>
        </authorList>
    </citation>
    <scope>NUCLEOTIDE SEQUENCE [MRNA]</scope>
    <scope>FUNCTION (MICROBIAL INFECTION)</scope>
</reference>
<accession>Q08200</accession>
<gene>
    <name evidence="1" type="primary">RPL10</name>
    <name type="synonym">JIF1</name>
</gene>
<proteinExistence type="evidence at protein level"/>
<evidence type="ECO:0000250" key="1">
    <source>
        <dbReference type="UniProtKB" id="P27635"/>
    </source>
</evidence>
<evidence type="ECO:0000250" key="2">
    <source>
        <dbReference type="UniProtKB" id="Q6ZWV3"/>
    </source>
</evidence>
<evidence type="ECO:0000305" key="3"/>
<evidence type="ECO:0000305" key="4">
    <source>
    </source>
</evidence>
<organism>
    <name type="scientific">Gallus gallus</name>
    <name type="common">Chicken</name>
    <dbReference type="NCBI Taxonomy" id="9031"/>
    <lineage>
        <taxon>Eukaryota</taxon>
        <taxon>Metazoa</taxon>
        <taxon>Chordata</taxon>
        <taxon>Craniata</taxon>
        <taxon>Vertebrata</taxon>
        <taxon>Euteleostomi</taxon>
        <taxon>Archelosauria</taxon>
        <taxon>Archosauria</taxon>
        <taxon>Dinosauria</taxon>
        <taxon>Saurischia</taxon>
        <taxon>Theropoda</taxon>
        <taxon>Coelurosauria</taxon>
        <taxon>Aves</taxon>
        <taxon>Neognathae</taxon>
        <taxon>Galloanserae</taxon>
        <taxon>Galliformes</taxon>
        <taxon>Phasianidae</taxon>
        <taxon>Phasianinae</taxon>
        <taxon>Gallus</taxon>
    </lineage>
</organism>
<name>RL10_CHICK</name>
<dbReference type="EMBL" id="L13234">
    <property type="protein sequence ID" value="AAA48928.1"/>
    <property type="molecule type" value="mRNA"/>
</dbReference>
<dbReference type="PIR" id="A48226">
    <property type="entry name" value="A48226"/>
</dbReference>
<dbReference type="PDB" id="8Q7Z">
    <property type="method" value="EM"/>
    <property type="resolution" value="2.50 A"/>
    <property type="chains" value="BI=1-210"/>
</dbReference>
<dbReference type="PDB" id="8Q87">
    <property type="method" value="EM"/>
    <property type="resolution" value="2.40 A"/>
    <property type="chains" value="BI=1-210"/>
</dbReference>
<dbReference type="PDBsum" id="8Q7Z"/>
<dbReference type="PDBsum" id="8Q87"/>
<dbReference type="SMR" id="Q08200"/>
<dbReference type="FunCoup" id="Q08200">
    <property type="interactions" value="735"/>
</dbReference>
<dbReference type="PaxDb" id="9031-ENSGALP00000042855"/>
<dbReference type="eggNOG" id="KOG0857">
    <property type="taxonomic scope" value="Eukaryota"/>
</dbReference>
<dbReference type="InParanoid" id="Q08200"/>
<dbReference type="PhylomeDB" id="Q08200"/>
<dbReference type="Proteomes" id="UP000000539">
    <property type="component" value="Unassembled WGS sequence"/>
</dbReference>
<dbReference type="GO" id="GO:0022625">
    <property type="term" value="C:cytosolic large ribosomal subunit"/>
    <property type="evidence" value="ECO:0000250"/>
    <property type="project" value="UniProtKB"/>
</dbReference>
<dbReference type="GO" id="GO:0005634">
    <property type="term" value="C:nucleus"/>
    <property type="evidence" value="ECO:0000250"/>
    <property type="project" value="AgBase"/>
</dbReference>
<dbReference type="GO" id="GO:0003735">
    <property type="term" value="F:structural constituent of ribosome"/>
    <property type="evidence" value="ECO:0000250"/>
    <property type="project" value="UniProtKB"/>
</dbReference>
<dbReference type="GO" id="GO:0045182">
    <property type="term" value="F:translation regulator activity"/>
    <property type="evidence" value="ECO:0000250"/>
    <property type="project" value="UniProtKB"/>
</dbReference>
<dbReference type="GO" id="GO:1990403">
    <property type="term" value="P:embryonic brain development"/>
    <property type="evidence" value="ECO:0000250"/>
    <property type="project" value="UniProtKB"/>
</dbReference>
<dbReference type="GO" id="GO:0006417">
    <property type="term" value="P:regulation of translation"/>
    <property type="evidence" value="ECO:0000250"/>
    <property type="project" value="UniProtKB"/>
</dbReference>
<dbReference type="GO" id="GO:0006412">
    <property type="term" value="P:translation"/>
    <property type="evidence" value="ECO:0000318"/>
    <property type="project" value="GO_Central"/>
</dbReference>
<dbReference type="CDD" id="cd01433">
    <property type="entry name" value="Ribosomal_L16_L10e"/>
    <property type="match status" value="1"/>
</dbReference>
<dbReference type="FunFam" id="3.30.60.300:FF:000001">
    <property type="entry name" value="60S ribosomal protein L10"/>
    <property type="match status" value="1"/>
</dbReference>
<dbReference type="FunFam" id="3.90.1170.10:FF:000002">
    <property type="entry name" value="60S ribosomal protein L10"/>
    <property type="match status" value="1"/>
</dbReference>
<dbReference type="Gene3D" id="3.30.60.300">
    <property type="match status" value="1"/>
</dbReference>
<dbReference type="Gene3D" id="3.90.1170.10">
    <property type="entry name" value="Ribosomal protein L10e/L16"/>
    <property type="match status" value="1"/>
</dbReference>
<dbReference type="InterPro" id="IPR047873">
    <property type="entry name" value="Ribosomal_uL16"/>
</dbReference>
<dbReference type="InterPro" id="IPR018255">
    <property type="entry name" value="Ribosomal_uL16_CS_euk_arc"/>
</dbReference>
<dbReference type="InterPro" id="IPR016180">
    <property type="entry name" value="Ribosomal_uL16_dom"/>
</dbReference>
<dbReference type="InterPro" id="IPR001197">
    <property type="entry name" value="Ribosomal_uL16_euk_arch"/>
</dbReference>
<dbReference type="InterPro" id="IPR036920">
    <property type="entry name" value="Ribosomal_uL16_sf"/>
</dbReference>
<dbReference type="NCBIfam" id="NF003239">
    <property type="entry name" value="PRK04199.1-4"/>
    <property type="match status" value="1"/>
</dbReference>
<dbReference type="NCBIfam" id="TIGR00279">
    <property type="entry name" value="uL16_euk_arch"/>
    <property type="match status" value="1"/>
</dbReference>
<dbReference type="PANTHER" id="PTHR11726">
    <property type="entry name" value="60S RIBOSOMAL PROTEIN L10"/>
    <property type="match status" value="1"/>
</dbReference>
<dbReference type="Pfam" id="PF00252">
    <property type="entry name" value="Ribosomal_L16"/>
    <property type="match status" value="1"/>
</dbReference>
<dbReference type="PIRSF" id="PIRSF005590">
    <property type="entry name" value="Ribosomal_L10"/>
    <property type="match status" value="1"/>
</dbReference>
<dbReference type="SUPFAM" id="SSF54686">
    <property type="entry name" value="Ribosomal protein L16p/L10e"/>
    <property type="match status" value="1"/>
</dbReference>
<dbReference type="PROSITE" id="PS01257">
    <property type="entry name" value="RIBOSOMAL_L10E"/>
    <property type="match status" value="1"/>
</dbReference>